<protein>
    <recommendedName>
        <fullName>AB hydrolase superfamily protein YisY</fullName>
        <ecNumber>3.-.-.-</ecNumber>
    </recommendedName>
</protein>
<feature type="chain" id="PRO_0000365027" description="AB hydrolase superfamily protein YisY">
    <location>
        <begin position="1"/>
        <end position="268"/>
    </location>
</feature>
<feature type="domain" description="AB hydrolase-1" evidence="2">
    <location>
        <begin position="23"/>
        <end position="254"/>
    </location>
</feature>
<feature type="active site" evidence="1">
    <location>
        <position position="96"/>
    </location>
</feature>
<feature type="active site" evidence="1">
    <location>
        <position position="220"/>
    </location>
</feature>
<feature type="active site" evidence="1">
    <location>
        <position position="248"/>
    </location>
</feature>
<reference key="1">
    <citation type="journal article" date="1997" name="Microbiology">
        <title>Sequencing of regions downstream of addA (98 degrees) and citG (289 degrees) in Bacillus subtilis.</title>
        <authorList>
            <person name="Medina N."/>
            <person name="Vannier F."/>
            <person name="Roche B."/>
            <person name="Autret S."/>
            <person name="Levine A."/>
            <person name="Seror S.J."/>
        </authorList>
    </citation>
    <scope>NUCLEOTIDE SEQUENCE [GENOMIC DNA]</scope>
    <source>
        <strain>168</strain>
    </source>
</reference>
<reference key="2">
    <citation type="journal article" date="1997" name="Nature">
        <title>The complete genome sequence of the Gram-positive bacterium Bacillus subtilis.</title>
        <authorList>
            <person name="Kunst F."/>
            <person name="Ogasawara N."/>
            <person name="Moszer I."/>
            <person name="Albertini A.M."/>
            <person name="Alloni G."/>
            <person name="Azevedo V."/>
            <person name="Bertero M.G."/>
            <person name="Bessieres P."/>
            <person name="Bolotin A."/>
            <person name="Borchert S."/>
            <person name="Borriss R."/>
            <person name="Boursier L."/>
            <person name="Brans A."/>
            <person name="Braun M."/>
            <person name="Brignell S.C."/>
            <person name="Bron S."/>
            <person name="Brouillet S."/>
            <person name="Bruschi C.V."/>
            <person name="Caldwell B."/>
            <person name="Capuano V."/>
            <person name="Carter N.M."/>
            <person name="Choi S.-K."/>
            <person name="Codani J.-J."/>
            <person name="Connerton I.F."/>
            <person name="Cummings N.J."/>
            <person name="Daniel R.A."/>
            <person name="Denizot F."/>
            <person name="Devine K.M."/>
            <person name="Duesterhoeft A."/>
            <person name="Ehrlich S.D."/>
            <person name="Emmerson P.T."/>
            <person name="Entian K.-D."/>
            <person name="Errington J."/>
            <person name="Fabret C."/>
            <person name="Ferrari E."/>
            <person name="Foulger D."/>
            <person name="Fritz C."/>
            <person name="Fujita M."/>
            <person name="Fujita Y."/>
            <person name="Fuma S."/>
            <person name="Galizzi A."/>
            <person name="Galleron N."/>
            <person name="Ghim S.-Y."/>
            <person name="Glaser P."/>
            <person name="Goffeau A."/>
            <person name="Golightly E.J."/>
            <person name="Grandi G."/>
            <person name="Guiseppi G."/>
            <person name="Guy B.J."/>
            <person name="Haga K."/>
            <person name="Haiech J."/>
            <person name="Harwood C.R."/>
            <person name="Henaut A."/>
            <person name="Hilbert H."/>
            <person name="Holsappel S."/>
            <person name="Hosono S."/>
            <person name="Hullo M.-F."/>
            <person name="Itaya M."/>
            <person name="Jones L.-M."/>
            <person name="Joris B."/>
            <person name="Karamata D."/>
            <person name="Kasahara Y."/>
            <person name="Klaerr-Blanchard M."/>
            <person name="Klein C."/>
            <person name="Kobayashi Y."/>
            <person name="Koetter P."/>
            <person name="Koningstein G."/>
            <person name="Krogh S."/>
            <person name="Kumano M."/>
            <person name="Kurita K."/>
            <person name="Lapidus A."/>
            <person name="Lardinois S."/>
            <person name="Lauber J."/>
            <person name="Lazarevic V."/>
            <person name="Lee S.-M."/>
            <person name="Levine A."/>
            <person name="Liu H."/>
            <person name="Masuda S."/>
            <person name="Mauel C."/>
            <person name="Medigue C."/>
            <person name="Medina N."/>
            <person name="Mellado R.P."/>
            <person name="Mizuno M."/>
            <person name="Moestl D."/>
            <person name="Nakai S."/>
            <person name="Noback M."/>
            <person name="Noone D."/>
            <person name="O'Reilly M."/>
            <person name="Ogawa K."/>
            <person name="Ogiwara A."/>
            <person name="Oudega B."/>
            <person name="Park S.-H."/>
            <person name="Parro V."/>
            <person name="Pohl T.M."/>
            <person name="Portetelle D."/>
            <person name="Porwollik S."/>
            <person name="Prescott A.M."/>
            <person name="Presecan E."/>
            <person name="Pujic P."/>
            <person name="Purnelle B."/>
            <person name="Rapoport G."/>
            <person name="Rey M."/>
            <person name="Reynolds S."/>
            <person name="Rieger M."/>
            <person name="Rivolta C."/>
            <person name="Rocha E."/>
            <person name="Roche B."/>
            <person name="Rose M."/>
            <person name="Sadaie Y."/>
            <person name="Sato T."/>
            <person name="Scanlan E."/>
            <person name="Schleich S."/>
            <person name="Schroeter R."/>
            <person name="Scoffone F."/>
            <person name="Sekiguchi J."/>
            <person name="Sekowska A."/>
            <person name="Seror S.J."/>
            <person name="Serror P."/>
            <person name="Shin B.-S."/>
            <person name="Soldo B."/>
            <person name="Sorokin A."/>
            <person name="Tacconi E."/>
            <person name="Takagi T."/>
            <person name="Takahashi H."/>
            <person name="Takemaru K."/>
            <person name="Takeuchi M."/>
            <person name="Tamakoshi A."/>
            <person name="Tanaka T."/>
            <person name="Terpstra P."/>
            <person name="Tognoni A."/>
            <person name="Tosato V."/>
            <person name="Uchiyama S."/>
            <person name="Vandenbol M."/>
            <person name="Vannier F."/>
            <person name="Vassarotti A."/>
            <person name="Viari A."/>
            <person name="Wambutt R."/>
            <person name="Wedler E."/>
            <person name="Wedler H."/>
            <person name="Weitzenegger T."/>
            <person name="Winters P."/>
            <person name="Wipat A."/>
            <person name="Yamamoto H."/>
            <person name="Yamane K."/>
            <person name="Yasumoto K."/>
            <person name="Yata K."/>
            <person name="Yoshida K."/>
            <person name="Yoshikawa H.-F."/>
            <person name="Zumstein E."/>
            <person name="Yoshikawa H."/>
            <person name="Danchin A."/>
        </authorList>
    </citation>
    <scope>NUCLEOTIDE SEQUENCE [LARGE SCALE GENOMIC DNA]</scope>
    <source>
        <strain>168</strain>
    </source>
</reference>
<comment type="similarity">
    <text evidence="3">Belongs to the AB hydrolase superfamily.</text>
</comment>
<dbReference type="EC" id="3.-.-.-"/>
<dbReference type="EMBL" id="Y09476">
    <property type="protein sequence ID" value="CAA70654.1"/>
    <property type="molecule type" value="Genomic_DNA"/>
</dbReference>
<dbReference type="EMBL" id="AL009126">
    <property type="protein sequence ID" value="CAB12930.1"/>
    <property type="molecule type" value="Genomic_DNA"/>
</dbReference>
<dbReference type="PIR" id="H69838">
    <property type="entry name" value="H69838"/>
</dbReference>
<dbReference type="RefSeq" id="NP_388971.1">
    <property type="nucleotide sequence ID" value="NC_000964.3"/>
</dbReference>
<dbReference type="RefSeq" id="WP_003245141.1">
    <property type="nucleotide sequence ID" value="NZ_OZ025638.1"/>
</dbReference>
<dbReference type="SMR" id="O06734"/>
<dbReference type="FunCoup" id="O06734">
    <property type="interactions" value="232"/>
</dbReference>
<dbReference type="STRING" id="224308.BSU10900"/>
<dbReference type="ESTHER" id="bacsu-yisY">
    <property type="family name" value="Haloperoxidase"/>
</dbReference>
<dbReference type="PaxDb" id="224308-BSU10900"/>
<dbReference type="EnsemblBacteria" id="CAB12930">
    <property type="protein sequence ID" value="CAB12930"/>
    <property type="gene ID" value="BSU_10900"/>
</dbReference>
<dbReference type="GeneID" id="939790"/>
<dbReference type="KEGG" id="bsu:BSU10900"/>
<dbReference type="PATRIC" id="fig|224308.179.peg.1172"/>
<dbReference type="eggNOG" id="COG2267">
    <property type="taxonomic scope" value="Bacteria"/>
</dbReference>
<dbReference type="InParanoid" id="O06734"/>
<dbReference type="OrthoDB" id="9773293at2"/>
<dbReference type="PhylomeDB" id="O06734"/>
<dbReference type="BioCyc" id="BSUB:BSU10900-MONOMER"/>
<dbReference type="Proteomes" id="UP000001570">
    <property type="component" value="Chromosome"/>
</dbReference>
<dbReference type="GO" id="GO:0016020">
    <property type="term" value="C:membrane"/>
    <property type="evidence" value="ECO:0000318"/>
    <property type="project" value="GO_Central"/>
</dbReference>
<dbReference type="GO" id="GO:0016787">
    <property type="term" value="F:hydrolase activity"/>
    <property type="evidence" value="ECO:0007669"/>
    <property type="project" value="UniProtKB-KW"/>
</dbReference>
<dbReference type="Gene3D" id="3.40.50.1820">
    <property type="entry name" value="alpha/beta hydrolase"/>
    <property type="match status" value="1"/>
</dbReference>
<dbReference type="InterPro" id="IPR000073">
    <property type="entry name" value="AB_hydrolase_1"/>
</dbReference>
<dbReference type="InterPro" id="IPR029058">
    <property type="entry name" value="AB_hydrolase_fold"/>
</dbReference>
<dbReference type="InterPro" id="IPR050266">
    <property type="entry name" value="AB_hydrolase_sf"/>
</dbReference>
<dbReference type="InterPro" id="IPR000639">
    <property type="entry name" value="Epox_hydrolase-like"/>
</dbReference>
<dbReference type="PANTHER" id="PTHR43798:SF31">
    <property type="entry name" value="AB HYDROLASE SUPERFAMILY PROTEIN YCLE"/>
    <property type="match status" value="1"/>
</dbReference>
<dbReference type="PANTHER" id="PTHR43798">
    <property type="entry name" value="MONOACYLGLYCEROL LIPASE"/>
    <property type="match status" value="1"/>
</dbReference>
<dbReference type="Pfam" id="PF00561">
    <property type="entry name" value="Abhydrolase_1"/>
    <property type="match status" value="1"/>
</dbReference>
<dbReference type="PRINTS" id="PR00111">
    <property type="entry name" value="ABHYDROLASE"/>
</dbReference>
<dbReference type="PRINTS" id="PR00412">
    <property type="entry name" value="EPOXHYDRLASE"/>
</dbReference>
<dbReference type="SUPFAM" id="SSF53474">
    <property type="entry name" value="alpha/beta-Hydrolases"/>
    <property type="match status" value="1"/>
</dbReference>
<accession>O06734</accession>
<accession>Q796Q4</accession>
<keyword id="KW-0378">Hydrolase</keyword>
<keyword id="KW-1185">Reference proteome</keyword>
<name>YISY_BACSU</name>
<organism>
    <name type="scientific">Bacillus subtilis (strain 168)</name>
    <dbReference type="NCBI Taxonomy" id="224308"/>
    <lineage>
        <taxon>Bacteria</taxon>
        <taxon>Bacillati</taxon>
        <taxon>Bacillota</taxon>
        <taxon>Bacilli</taxon>
        <taxon>Bacillales</taxon>
        <taxon>Bacillaceae</taxon>
        <taxon>Bacillus</taxon>
    </lineage>
</organism>
<gene>
    <name type="primary">yisY</name>
    <name type="ordered locus">BSU10900</name>
</gene>
<evidence type="ECO:0000250" key="1"/>
<evidence type="ECO:0000255" key="2"/>
<evidence type="ECO:0000305" key="3"/>
<proteinExistence type="inferred from homology"/>
<sequence>MGHYIKTEEHVTLFVEDIGHGRPIIFLHGWPLNHKMFEYQMNELPKRGFRFIGVDLRGYGQSDRPWEGYDYDTMADDVKAVIYTLQLENAILAGFSMGGAIAIRYMARHEGADVDKLILLSAAAPAFTKRPGYPYGMRKQDIDDMIELFKADRPKTLADLGKQFFEKKVSPELRQWFLNLMLEASSYGTIHSGIALRDEDLRKELAAIKVPTLILHGRKDRIAPFDFAKELKRGIKQSELVPFANSGHGAFYEEKEKINSLIAQFSNS</sequence>